<organism>
    <name type="scientific">Schizosaccharomyces pombe (strain 972 / ATCC 24843)</name>
    <name type="common">Fission yeast</name>
    <dbReference type="NCBI Taxonomy" id="284812"/>
    <lineage>
        <taxon>Eukaryota</taxon>
        <taxon>Fungi</taxon>
        <taxon>Dikarya</taxon>
        <taxon>Ascomycota</taxon>
        <taxon>Taphrinomycotina</taxon>
        <taxon>Schizosaccharomycetes</taxon>
        <taxon>Schizosaccharomycetales</taxon>
        <taxon>Schizosaccharomycetaceae</taxon>
        <taxon>Schizosaccharomyces</taxon>
    </lineage>
</organism>
<feature type="chain" id="PRO_0000374028" description="Uncharacterized oxidoreductase C663.08c">
    <location>
        <begin position="1"/>
        <end position="253"/>
    </location>
</feature>
<feature type="active site" description="Proton donor" evidence="2">
    <location>
        <position position="158"/>
    </location>
</feature>
<feature type="active site" description="Lowers pKa of active site Tyr" evidence="2">
    <location>
        <position position="162"/>
    </location>
</feature>
<feature type="binding site" evidence="1">
    <location>
        <position position="17"/>
    </location>
    <ligand>
        <name>NADP(+)</name>
        <dbReference type="ChEBI" id="CHEBI:58349"/>
    </ligand>
</feature>
<feature type="binding site" evidence="1">
    <location>
        <position position="36"/>
    </location>
    <ligand>
        <name>NADP(+)</name>
        <dbReference type="ChEBI" id="CHEBI:58349"/>
    </ligand>
</feature>
<feature type="binding site" evidence="1">
    <location>
        <position position="62"/>
    </location>
    <ligand>
        <name>NADP(+)</name>
        <dbReference type="ChEBI" id="CHEBI:58349"/>
    </ligand>
</feature>
<feature type="binding site" evidence="2">
    <location>
        <position position="89"/>
    </location>
    <ligand>
        <name>NADP(+)</name>
        <dbReference type="ChEBI" id="CHEBI:58349"/>
    </ligand>
</feature>
<feature type="binding site" evidence="2">
    <location>
        <position position="158"/>
    </location>
    <ligand>
        <name>NADP(+)</name>
        <dbReference type="ChEBI" id="CHEBI:58349"/>
    </ligand>
</feature>
<feature type="binding site" evidence="2">
    <location>
        <position position="162"/>
    </location>
    <ligand>
        <name>NADP(+)</name>
        <dbReference type="ChEBI" id="CHEBI:58349"/>
    </ligand>
</feature>
<feature type="binding site" evidence="2">
    <location>
        <position position="191"/>
    </location>
    <ligand>
        <name>NADP(+)</name>
        <dbReference type="ChEBI" id="CHEBI:58349"/>
    </ligand>
</feature>
<feature type="binding site" evidence="1">
    <location>
        <position position="193"/>
    </location>
    <ligand>
        <name>NADP(+)</name>
        <dbReference type="ChEBI" id="CHEBI:58349"/>
    </ligand>
</feature>
<name>YCP8_SCHPO</name>
<evidence type="ECO:0000250" key="1">
    <source>
        <dbReference type="UniProtKB" id="L0E2Z4"/>
    </source>
</evidence>
<evidence type="ECO:0000250" key="2">
    <source>
        <dbReference type="UniProtKB" id="O93868"/>
    </source>
</evidence>
<evidence type="ECO:0000269" key="3">
    <source>
    </source>
</evidence>
<evidence type="ECO:0000305" key="4"/>
<sequence length="253" mass="27697">MSTTNKIYFIAGGNRGIGLSLVKELSNRKGTVVFASARKPGAATKLQEWSKSHSNVHIIKLDVSSLESANEAAQEVTKVVDAVDVLWVNSAVFHSFGPVVNTPDDVWNSHYKTNVLGPIHVYQAFYPLIKKGRSKIIVFTSSLAGSMGAFFPSSQSAYGQSKAALNYTMKEISFELQDEGFIVISIHPGAVRTDSAQEIVNQHAEKKPEILDLFAKQALTPEKSASDMLKVVDNLKPENNGLFYNYDGTIIPF</sequence>
<comment type="subcellular location">
    <subcellularLocation>
        <location evidence="3">Cytoplasm</location>
    </subcellularLocation>
    <subcellularLocation>
        <location evidence="3">Nucleus</location>
    </subcellularLocation>
</comment>
<comment type="similarity">
    <text evidence="4">Belongs to the short-chain dehydrogenases/reductases (SDR) family.</text>
</comment>
<reference key="1">
    <citation type="journal article" date="2002" name="Nature">
        <title>The genome sequence of Schizosaccharomyces pombe.</title>
        <authorList>
            <person name="Wood V."/>
            <person name="Gwilliam R."/>
            <person name="Rajandream M.A."/>
            <person name="Lyne M.H."/>
            <person name="Lyne R."/>
            <person name="Stewart A."/>
            <person name="Sgouros J.G."/>
            <person name="Peat N."/>
            <person name="Hayles J."/>
            <person name="Baker S.G."/>
            <person name="Basham D."/>
            <person name="Bowman S."/>
            <person name="Brooks K."/>
            <person name="Brown D."/>
            <person name="Brown S."/>
            <person name="Chillingworth T."/>
            <person name="Churcher C.M."/>
            <person name="Collins M."/>
            <person name="Connor R."/>
            <person name="Cronin A."/>
            <person name="Davis P."/>
            <person name="Feltwell T."/>
            <person name="Fraser A."/>
            <person name="Gentles S."/>
            <person name="Goble A."/>
            <person name="Hamlin N."/>
            <person name="Harris D.E."/>
            <person name="Hidalgo J."/>
            <person name="Hodgson G."/>
            <person name="Holroyd S."/>
            <person name="Hornsby T."/>
            <person name="Howarth S."/>
            <person name="Huckle E.J."/>
            <person name="Hunt S."/>
            <person name="Jagels K."/>
            <person name="James K.D."/>
            <person name="Jones L."/>
            <person name="Jones M."/>
            <person name="Leather S."/>
            <person name="McDonald S."/>
            <person name="McLean J."/>
            <person name="Mooney P."/>
            <person name="Moule S."/>
            <person name="Mungall K.L."/>
            <person name="Murphy L.D."/>
            <person name="Niblett D."/>
            <person name="Odell C."/>
            <person name="Oliver K."/>
            <person name="O'Neil S."/>
            <person name="Pearson D."/>
            <person name="Quail M.A."/>
            <person name="Rabbinowitsch E."/>
            <person name="Rutherford K.M."/>
            <person name="Rutter S."/>
            <person name="Saunders D."/>
            <person name="Seeger K."/>
            <person name="Sharp S."/>
            <person name="Skelton J."/>
            <person name="Simmonds M.N."/>
            <person name="Squares R."/>
            <person name="Squares S."/>
            <person name="Stevens K."/>
            <person name="Taylor K."/>
            <person name="Taylor R.G."/>
            <person name="Tivey A."/>
            <person name="Walsh S.V."/>
            <person name="Warren T."/>
            <person name="Whitehead S."/>
            <person name="Woodward J.R."/>
            <person name="Volckaert G."/>
            <person name="Aert R."/>
            <person name="Robben J."/>
            <person name="Grymonprez B."/>
            <person name="Weltjens I."/>
            <person name="Vanstreels E."/>
            <person name="Rieger M."/>
            <person name="Schaefer M."/>
            <person name="Mueller-Auer S."/>
            <person name="Gabel C."/>
            <person name="Fuchs M."/>
            <person name="Duesterhoeft A."/>
            <person name="Fritzc C."/>
            <person name="Holzer E."/>
            <person name="Moestl D."/>
            <person name="Hilbert H."/>
            <person name="Borzym K."/>
            <person name="Langer I."/>
            <person name="Beck A."/>
            <person name="Lehrach H."/>
            <person name="Reinhardt R."/>
            <person name="Pohl T.M."/>
            <person name="Eger P."/>
            <person name="Zimmermann W."/>
            <person name="Wedler H."/>
            <person name="Wambutt R."/>
            <person name="Purnelle B."/>
            <person name="Goffeau A."/>
            <person name="Cadieu E."/>
            <person name="Dreano S."/>
            <person name="Gloux S."/>
            <person name="Lelaure V."/>
            <person name="Mottier S."/>
            <person name="Galibert F."/>
            <person name="Aves S.J."/>
            <person name="Xiang Z."/>
            <person name="Hunt C."/>
            <person name="Moore K."/>
            <person name="Hurst S.M."/>
            <person name="Lucas M."/>
            <person name="Rochet M."/>
            <person name="Gaillardin C."/>
            <person name="Tallada V.A."/>
            <person name="Garzon A."/>
            <person name="Thode G."/>
            <person name="Daga R.R."/>
            <person name="Cruzado L."/>
            <person name="Jimenez J."/>
            <person name="Sanchez M."/>
            <person name="del Rey F."/>
            <person name="Benito J."/>
            <person name="Dominguez A."/>
            <person name="Revuelta J.L."/>
            <person name="Moreno S."/>
            <person name="Armstrong J."/>
            <person name="Forsburg S.L."/>
            <person name="Cerutti L."/>
            <person name="Lowe T."/>
            <person name="McCombie W.R."/>
            <person name="Paulsen I."/>
            <person name="Potashkin J."/>
            <person name="Shpakovski G.V."/>
            <person name="Ussery D."/>
            <person name="Barrell B.G."/>
            <person name="Nurse P."/>
        </authorList>
    </citation>
    <scope>NUCLEOTIDE SEQUENCE [LARGE SCALE GENOMIC DNA]</scope>
    <source>
        <strain>972 / ATCC 24843</strain>
    </source>
</reference>
<reference key="2">
    <citation type="journal article" date="2006" name="Nat. Biotechnol.">
        <title>ORFeome cloning and global analysis of protein localization in the fission yeast Schizosaccharomyces pombe.</title>
        <authorList>
            <person name="Matsuyama A."/>
            <person name="Arai R."/>
            <person name="Yashiroda Y."/>
            <person name="Shirai A."/>
            <person name="Kamata A."/>
            <person name="Sekido S."/>
            <person name="Kobayashi Y."/>
            <person name="Hashimoto A."/>
            <person name="Hamamoto M."/>
            <person name="Hiraoka Y."/>
            <person name="Horinouchi S."/>
            <person name="Yoshida M."/>
        </authorList>
    </citation>
    <scope>SUBCELLULAR LOCATION [LARGE SCALE ANALYSIS]</scope>
</reference>
<accession>Q7Z9I3</accession>
<proteinExistence type="inferred from homology"/>
<keyword id="KW-0963">Cytoplasm</keyword>
<keyword id="KW-0521">NADP</keyword>
<keyword id="KW-0539">Nucleus</keyword>
<keyword id="KW-0560">Oxidoreductase</keyword>
<keyword id="KW-1185">Reference proteome</keyword>
<protein>
    <recommendedName>
        <fullName>Uncharacterized oxidoreductase C663.08c</fullName>
        <ecNumber>1.-.-.-</ecNumber>
    </recommendedName>
</protein>
<dbReference type="EC" id="1.-.-.-"/>
<dbReference type="EMBL" id="CU329672">
    <property type="protein sequence ID" value="CAA20368.1"/>
    <property type="molecule type" value="Genomic_DNA"/>
</dbReference>
<dbReference type="PIR" id="T41539">
    <property type="entry name" value="T41539"/>
</dbReference>
<dbReference type="RefSeq" id="NP_588269.1">
    <property type="nucleotide sequence ID" value="NM_001023259.2"/>
</dbReference>
<dbReference type="SMR" id="Q7Z9I3"/>
<dbReference type="BioGRID" id="275317">
    <property type="interactions" value="1"/>
</dbReference>
<dbReference type="FunCoup" id="Q7Z9I3">
    <property type="interactions" value="111"/>
</dbReference>
<dbReference type="STRING" id="284812.Q7Z9I3"/>
<dbReference type="iPTMnet" id="Q7Z9I3"/>
<dbReference type="PaxDb" id="4896-SPCC663.08c.1"/>
<dbReference type="EnsemblFungi" id="SPCC663.08c.1">
    <property type="protein sequence ID" value="SPCC663.08c.1:pep"/>
    <property type="gene ID" value="SPCC663.08c"/>
</dbReference>
<dbReference type="KEGG" id="spo:2538733"/>
<dbReference type="PomBase" id="SPCC663.08c"/>
<dbReference type="VEuPathDB" id="FungiDB:SPCC663.08c"/>
<dbReference type="eggNOG" id="KOG1611">
    <property type="taxonomic scope" value="Eukaryota"/>
</dbReference>
<dbReference type="HOGENOM" id="CLU_010194_9_1_1"/>
<dbReference type="InParanoid" id="Q7Z9I3"/>
<dbReference type="OMA" id="EMVINAK"/>
<dbReference type="PhylomeDB" id="Q7Z9I3"/>
<dbReference type="PRO" id="PR:Q7Z9I3"/>
<dbReference type="Proteomes" id="UP000002485">
    <property type="component" value="Chromosome III"/>
</dbReference>
<dbReference type="GO" id="GO:0005737">
    <property type="term" value="C:cytoplasm"/>
    <property type="evidence" value="ECO:0000318"/>
    <property type="project" value="GO_Central"/>
</dbReference>
<dbReference type="GO" id="GO:0005829">
    <property type="term" value="C:cytosol"/>
    <property type="evidence" value="ECO:0007005"/>
    <property type="project" value="PomBase"/>
</dbReference>
<dbReference type="GO" id="GO:0005634">
    <property type="term" value="C:nucleus"/>
    <property type="evidence" value="ECO:0007005"/>
    <property type="project" value="PomBase"/>
</dbReference>
<dbReference type="GO" id="GO:0016491">
    <property type="term" value="F:oxidoreductase activity"/>
    <property type="evidence" value="ECO:0000318"/>
    <property type="project" value="GO_Central"/>
</dbReference>
<dbReference type="GO" id="GO:0110095">
    <property type="term" value="P:cellular detoxification of aldehyde"/>
    <property type="evidence" value="ECO:0000250"/>
    <property type="project" value="PomBase"/>
</dbReference>
<dbReference type="CDD" id="cd05325">
    <property type="entry name" value="carb_red_sniffer_like_SDR_c"/>
    <property type="match status" value="1"/>
</dbReference>
<dbReference type="FunFam" id="3.40.50.720:FF:000599">
    <property type="entry name" value="Uncharacterized oxidoreductase C663.06c"/>
    <property type="match status" value="1"/>
</dbReference>
<dbReference type="Gene3D" id="3.40.50.720">
    <property type="entry name" value="NAD(P)-binding Rossmann-like Domain"/>
    <property type="match status" value="1"/>
</dbReference>
<dbReference type="InterPro" id="IPR051468">
    <property type="entry name" value="Fungal_SecMetab_SDRs"/>
</dbReference>
<dbReference type="InterPro" id="IPR036291">
    <property type="entry name" value="NAD(P)-bd_dom_sf"/>
</dbReference>
<dbReference type="InterPro" id="IPR002347">
    <property type="entry name" value="SDR_fam"/>
</dbReference>
<dbReference type="PANTHER" id="PTHR43544:SF7">
    <property type="entry name" value="NADB-LER2"/>
    <property type="match status" value="1"/>
</dbReference>
<dbReference type="PANTHER" id="PTHR43544">
    <property type="entry name" value="SHORT-CHAIN DEHYDROGENASE/REDUCTASE"/>
    <property type="match status" value="1"/>
</dbReference>
<dbReference type="Pfam" id="PF00106">
    <property type="entry name" value="adh_short"/>
    <property type="match status" value="1"/>
</dbReference>
<dbReference type="PRINTS" id="PR00081">
    <property type="entry name" value="GDHRDH"/>
</dbReference>
<dbReference type="SUPFAM" id="SSF51735">
    <property type="entry name" value="NAD(P)-binding Rossmann-fold domains"/>
    <property type="match status" value="1"/>
</dbReference>
<gene>
    <name type="ORF">SPCC663.08c</name>
</gene>